<organism>
    <name type="scientific">Mus musculus</name>
    <name type="common">Mouse</name>
    <dbReference type="NCBI Taxonomy" id="10090"/>
    <lineage>
        <taxon>Eukaryota</taxon>
        <taxon>Metazoa</taxon>
        <taxon>Chordata</taxon>
        <taxon>Craniata</taxon>
        <taxon>Vertebrata</taxon>
        <taxon>Euteleostomi</taxon>
        <taxon>Mammalia</taxon>
        <taxon>Eutheria</taxon>
        <taxon>Euarchontoglires</taxon>
        <taxon>Glires</taxon>
        <taxon>Rodentia</taxon>
        <taxon>Myomorpha</taxon>
        <taxon>Muroidea</taxon>
        <taxon>Muridae</taxon>
        <taxon>Murinae</taxon>
        <taxon>Mus</taxon>
        <taxon>Mus</taxon>
    </lineage>
</organism>
<accession>Q9D805</accession>
<accession>E9QNM7</accession>
<accession>O35919</accession>
<protein>
    <recommendedName>
        <fullName>Calpain-9</fullName>
        <ecNumber>3.4.22.-</ecNumber>
    </recommendedName>
    <alternativeName>
        <fullName>Digestive tract-specific calpain</fullName>
    </alternativeName>
    <alternativeName>
        <fullName>New calpain 4</fullName>
        <shortName>nCL-4</shortName>
    </alternativeName>
</protein>
<dbReference type="EC" id="3.4.22.-"/>
<dbReference type="EMBL" id="AK008629">
    <property type="protein sequence ID" value="BAB25791.1"/>
    <property type="molecule type" value="mRNA"/>
</dbReference>
<dbReference type="EMBL" id="AC126930">
    <property type="status" value="NOT_ANNOTATED_CDS"/>
    <property type="molecule type" value="Genomic_DNA"/>
</dbReference>
<dbReference type="EMBL" id="AC135015">
    <property type="status" value="NOT_ANNOTATED_CDS"/>
    <property type="molecule type" value="Genomic_DNA"/>
</dbReference>
<dbReference type="EMBL" id="U89513">
    <property type="protein sequence ID" value="AAB69114.1"/>
    <property type="molecule type" value="mRNA"/>
</dbReference>
<dbReference type="CCDS" id="CCDS40514.1"/>
<dbReference type="RefSeq" id="NP_076198.2">
    <property type="nucleotide sequence ID" value="NM_023709.4"/>
</dbReference>
<dbReference type="SMR" id="Q9D805"/>
<dbReference type="CORUM" id="Q9D805"/>
<dbReference type="FunCoup" id="Q9D805">
    <property type="interactions" value="339"/>
</dbReference>
<dbReference type="STRING" id="10090.ENSMUSP00000090717"/>
<dbReference type="MEROPS" id="C02.006"/>
<dbReference type="GlyGen" id="Q9D805">
    <property type="glycosylation" value="1 site"/>
</dbReference>
<dbReference type="iPTMnet" id="Q9D805"/>
<dbReference type="PhosphoSitePlus" id="Q9D805"/>
<dbReference type="PaxDb" id="10090-ENSMUSP00000090717"/>
<dbReference type="ProteomicsDB" id="281769"/>
<dbReference type="Antibodypedia" id="20792">
    <property type="antibodies" value="254 antibodies from 31 providers"/>
</dbReference>
<dbReference type="DNASU" id="73647"/>
<dbReference type="Ensembl" id="ENSMUST00000093033.6">
    <property type="protein sequence ID" value="ENSMUSP00000090717.6"/>
    <property type="gene ID" value="ENSMUSG00000031981.8"/>
</dbReference>
<dbReference type="GeneID" id="73647"/>
<dbReference type="KEGG" id="mmu:73647"/>
<dbReference type="UCSC" id="uc009nxf.2">
    <property type="organism name" value="mouse"/>
</dbReference>
<dbReference type="AGR" id="MGI:1920897"/>
<dbReference type="CTD" id="10753"/>
<dbReference type="MGI" id="MGI:1920897">
    <property type="gene designation" value="Capn9"/>
</dbReference>
<dbReference type="VEuPathDB" id="HostDB:ENSMUSG00000031981"/>
<dbReference type="eggNOG" id="KOG0045">
    <property type="taxonomic scope" value="Eukaryota"/>
</dbReference>
<dbReference type="GeneTree" id="ENSGT00940000158966"/>
<dbReference type="HOGENOM" id="CLU_010982_0_3_1"/>
<dbReference type="InParanoid" id="Q9D805"/>
<dbReference type="OMA" id="IEQTIYS"/>
<dbReference type="OrthoDB" id="424753at2759"/>
<dbReference type="PhylomeDB" id="Q9D805"/>
<dbReference type="TreeFam" id="TF314748"/>
<dbReference type="BRENDA" id="3.4.22.B29">
    <property type="organism ID" value="3474"/>
</dbReference>
<dbReference type="Reactome" id="R-MMU-1474228">
    <property type="pathway name" value="Degradation of the extracellular matrix"/>
</dbReference>
<dbReference type="BioGRID-ORCS" id="73647">
    <property type="hits" value="3 hits in 78 CRISPR screens"/>
</dbReference>
<dbReference type="ChiTaRS" id="Capn9">
    <property type="organism name" value="mouse"/>
</dbReference>
<dbReference type="PRO" id="PR:Q9D805"/>
<dbReference type="Proteomes" id="UP000000589">
    <property type="component" value="Chromosome 8"/>
</dbReference>
<dbReference type="RNAct" id="Q9D805">
    <property type="molecule type" value="protein"/>
</dbReference>
<dbReference type="Bgee" id="ENSMUSG00000031981">
    <property type="expression patterns" value="Expressed in pyloric antrum and 41 other cell types or tissues"/>
</dbReference>
<dbReference type="ExpressionAtlas" id="Q9D805">
    <property type="expression patterns" value="baseline and differential"/>
</dbReference>
<dbReference type="GO" id="GO:0005737">
    <property type="term" value="C:cytoplasm"/>
    <property type="evidence" value="ECO:0007669"/>
    <property type="project" value="UniProtKB-SubCell"/>
</dbReference>
<dbReference type="GO" id="GO:0005509">
    <property type="term" value="F:calcium ion binding"/>
    <property type="evidence" value="ECO:0007669"/>
    <property type="project" value="InterPro"/>
</dbReference>
<dbReference type="GO" id="GO:0004198">
    <property type="term" value="F:calcium-dependent cysteine-type endopeptidase activity"/>
    <property type="evidence" value="ECO:0007669"/>
    <property type="project" value="InterPro"/>
</dbReference>
<dbReference type="GO" id="GO:0006508">
    <property type="term" value="P:proteolysis"/>
    <property type="evidence" value="ECO:0007669"/>
    <property type="project" value="UniProtKB-KW"/>
</dbReference>
<dbReference type="CDD" id="cd00214">
    <property type="entry name" value="Calpain_III"/>
    <property type="match status" value="1"/>
</dbReference>
<dbReference type="CDD" id="cd00044">
    <property type="entry name" value="CysPc"/>
    <property type="match status" value="1"/>
</dbReference>
<dbReference type="FunFam" id="1.10.238.10:FF:000151">
    <property type="entry name" value="Calpain 9"/>
    <property type="match status" value="1"/>
</dbReference>
<dbReference type="FunFam" id="2.60.120.380:FF:000001">
    <property type="entry name" value="Calpain-1 catalytic subunit"/>
    <property type="match status" value="1"/>
</dbReference>
<dbReference type="FunFam" id="3.90.70.10:FF:000001">
    <property type="entry name" value="Calpain-1 catalytic subunit"/>
    <property type="match status" value="1"/>
</dbReference>
<dbReference type="Gene3D" id="2.60.120.380">
    <property type="match status" value="1"/>
</dbReference>
<dbReference type="Gene3D" id="3.90.70.10">
    <property type="entry name" value="Cysteine proteinases"/>
    <property type="match status" value="1"/>
</dbReference>
<dbReference type="Gene3D" id="1.10.238.10">
    <property type="entry name" value="EF-hand"/>
    <property type="match status" value="1"/>
</dbReference>
<dbReference type="InterPro" id="IPR033883">
    <property type="entry name" value="C2_III"/>
</dbReference>
<dbReference type="InterPro" id="IPR022684">
    <property type="entry name" value="Calpain_cysteine_protease"/>
</dbReference>
<dbReference type="InterPro" id="IPR022682">
    <property type="entry name" value="Calpain_domain_III"/>
</dbReference>
<dbReference type="InterPro" id="IPR022683">
    <property type="entry name" value="Calpain_III"/>
</dbReference>
<dbReference type="InterPro" id="IPR036213">
    <property type="entry name" value="Calpain_III_sf"/>
</dbReference>
<dbReference type="InterPro" id="IPR011992">
    <property type="entry name" value="EF-hand-dom_pair"/>
</dbReference>
<dbReference type="InterPro" id="IPR018247">
    <property type="entry name" value="EF_Hand_1_Ca_BS"/>
</dbReference>
<dbReference type="InterPro" id="IPR002048">
    <property type="entry name" value="EF_hand_dom"/>
</dbReference>
<dbReference type="InterPro" id="IPR038765">
    <property type="entry name" value="Papain-like_cys_pep_sf"/>
</dbReference>
<dbReference type="InterPro" id="IPR000169">
    <property type="entry name" value="Pept_cys_AS"/>
</dbReference>
<dbReference type="InterPro" id="IPR001300">
    <property type="entry name" value="Peptidase_C2_calpain_cat"/>
</dbReference>
<dbReference type="PANTHER" id="PTHR10183">
    <property type="entry name" value="CALPAIN"/>
    <property type="match status" value="1"/>
</dbReference>
<dbReference type="PANTHER" id="PTHR10183:SF385">
    <property type="entry name" value="CALPAIN-9"/>
    <property type="match status" value="1"/>
</dbReference>
<dbReference type="Pfam" id="PF01067">
    <property type="entry name" value="Calpain_III"/>
    <property type="match status" value="1"/>
</dbReference>
<dbReference type="Pfam" id="PF00648">
    <property type="entry name" value="Peptidase_C2"/>
    <property type="match status" value="1"/>
</dbReference>
<dbReference type="PRINTS" id="PR00704">
    <property type="entry name" value="CALPAIN"/>
</dbReference>
<dbReference type="SMART" id="SM00720">
    <property type="entry name" value="calpain_III"/>
    <property type="match status" value="1"/>
</dbReference>
<dbReference type="SMART" id="SM00230">
    <property type="entry name" value="CysPc"/>
    <property type="match status" value="1"/>
</dbReference>
<dbReference type="SMART" id="SM00054">
    <property type="entry name" value="EFh"/>
    <property type="match status" value="2"/>
</dbReference>
<dbReference type="SUPFAM" id="SSF49758">
    <property type="entry name" value="Calpain large subunit, middle domain (domain III)"/>
    <property type="match status" value="1"/>
</dbReference>
<dbReference type="SUPFAM" id="SSF54001">
    <property type="entry name" value="Cysteine proteinases"/>
    <property type="match status" value="1"/>
</dbReference>
<dbReference type="SUPFAM" id="SSF47473">
    <property type="entry name" value="EF-hand"/>
    <property type="match status" value="1"/>
</dbReference>
<dbReference type="PROSITE" id="PS50203">
    <property type="entry name" value="CALPAIN_CAT"/>
    <property type="match status" value="1"/>
</dbReference>
<dbReference type="PROSITE" id="PS00018">
    <property type="entry name" value="EF_HAND_1"/>
    <property type="match status" value="2"/>
</dbReference>
<dbReference type="PROSITE" id="PS50222">
    <property type="entry name" value="EF_HAND_2"/>
    <property type="match status" value="3"/>
</dbReference>
<dbReference type="PROSITE" id="PS00139">
    <property type="entry name" value="THIOL_PROTEASE_CYS"/>
    <property type="match status" value="1"/>
</dbReference>
<reference key="1">
    <citation type="journal article" date="2005" name="Science">
        <title>The transcriptional landscape of the mammalian genome.</title>
        <authorList>
            <person name="Carninci P."/>
            <person name="Kasukawa T."/>
            <person name="Katayama S."/>
            <person name="Gough J."/>
            <person name="Frith M.C."/>
            <person name="Maeda N."/>
            <person name="Oyama R."/>
            <person name="Ravasi T."/>
            <person name="Lenhard B."/>
            <person name="Wells C."/>
            <person name="Kodzius R."/>
            <person name="Shimokawa K."/>
            <person name="Bajic V.B."/>
            <person name="Brenner S.E."/>
            <person name="Batalov S."/>
            <person name="Forrest A.R."/>
            <person name="Zavolan M."/>
            <person name="Davis M.J."/>
            <person name="Wilming L.G."/>
            <person name="Aidinis V."/>
            <person name="Allen J.E."/>
            <person name="Ambesi-Impiombato A."/>
            <person name="Apweiler R."/>
            <person name="Aturaliya R.N."/>
            <person name="Bailey T.L."/>
            <person name="Bansal M."/>
            <person name="Baxter L."/>
            <person name="Beisel K.W."/>
            <person name="Bersano T."/>
            <person name="Bono H."/>
            <person name="Chalk A.M."/>
            <person name="Chiu K.P."/>
            <person name="Choudhary V."/>
            <person name="Christoffels A."/>
            <person name="Clutterbuck D.R."/>
            <person name="Crowe M.L."/>
            <person name="Dalla E."/>
            <person name="Dalrymple B.P."/>
            <person name="de Bono B."/>
            <person name="Della Gatta G."/>
            <person name="di Bernardo D."/>
            <person name="Down T."/>
            <person name="Engstrom P."/>
            <person name="Fagiolini M."/>
            <person name="Faulkner G."/>
            <person name="Fletcher C.F."/>
            <person name="Fukushima T."/>
            <person name="Furuno M."/>
            <person name="Futaki S."/>
            <person name="Gariboldi M."/>
            <person name="Georgii-Hemming P."/>
            <person name="Gingeras T.R."/>
            <person name="Gojobori T."/>
            <person name="Green R.E."/>
            <person name="Gustincich S."/>
            <person name="Harbers M."/>
            <person name="Hayashi Y."/>
            <person name="Hensch T.K."/>
            <person name="Hirokawa N."/>
            <person name="Hill D."/>
            <person name="Huminiecki L."/>
            <person name="Iacono M."/>
            <person name="Ikeo K."/>
            <person name="Iwama A."/>
            <person name="Ishikawa T."/>
            <person name="Jakt M."/>
            <person name="Kanapin A."/>
            <person name="Katoh M."/>
            <person name="Kawasawa Y."/>
            <person name="Kelso J."/>
            <person name="Kitamura H."/>
            <person name="Kitano H."/>
            <person name="Kollias G."/>
            <person name="Krishnan S.P."/>
            <person name="Kruger A."/>
            <person name="Kummerfeld S.K."/>
            <person name="Kurochkin I.V."/>
            <person name="Lareau L.F."/>
            <person name="Lazarevic D."/>
            <person name="Lipovich L."/>
            <person name="Liu J."/>
            <person name="Liuni S."/>
            <person name="McWilliam S."/>
            <person name="Madan Babu M."/>
            <person name="Madera M."/>
            <person name="Marchionni L."/>
            <person name="Matsuda H."/>
            <person name="Matsuzawa S."/>
            <person name="Miki H."/>
            <person name="Mignone F."/>
            <person name="Miyake S."/>
            <person name="Morris K."/>
            <person name="Mottagui-Tabar S."/>
            <person name="Mulder N."/>
            <person name="Nakano N."/>
            <person name="Nakauchi H."/>
            <person name="Ng P."/>
            <person name="Nilsson R."/>
            <person name="Nishiguchi S."/>
            <person name="Nishikawa S."/>
            <person name="Nori F."/>
            <person name="Ohara O."/>
            <person name="Okazaki Y."/>
            <person name="Orlando V."/>
            <person name="Pang K.C."/>
            <person name="Pavan W.J."/>
            <person name="Pavesi G."/>
            <person name="Pesole G."/>
            <person name="Petrovsky N."/>
            <person name="Piazza S."/>
            <person name="Reed J."/>
            <person name="Reid J.F."/>
            <person name="Ring B.Z."/>
            <person name="Ringwald M."/>
            <person name="Rost B."/>
            <person name="Ruan Y."/>
            <person name="Salzberg S.L."/>
            <person name="Sandelin A."/>
            <person name="Schneider C."/>
            <person name="Schoenbach C."/>
            <person name="Sekiguchi K."/>
            <person name="Semple C.A."/>
            <person name="Seno S."/>
            <person name="Sessa L."/>
            <person name="Sheng Y."/>
            <person name="Shibata Y."/>
            <person name="Shimada H."/>
            <person name="Shimada K."/>
            <person name="Silva D."/>
            <person name="Sinclair B."/>
            <person name="Sperling S."/>
            <person name="Stupka E."/>
            <person name="Sugiura K."/>
            <person name="Sultana R."/>
            <person name="Takenaka Y."/>
            <person name="Taki K."/>
            <person name="Tammoja K."/>
            <person name="Tan S.L."/>
            <person name="Tang S."/>
            <person name="Taylor M.S."/>
            <person name="Tegner J."/>
            <person name="Teichmann S.A."/>
            <person name="Ueda H.R."/>
            <person name="van Nimwegen E."/>
            <person name="Verardo R."/>
            <person name="Wei C.L."/>
            <person name="Yagi K."/>
            <person name="Yamanishi H."/>
            <person name="Zabarovsky E."/>
            <person name="Zhu S."/>
            <person name="Zimmer A."/>
            <person name="Hide W."/>
            <person name="Bult C."/>
            <person name="Grimmond S.M."/>
            <person name="Teasdale R.D."/>
            <person name="Liu E.T."/>
            <person name="Brusic V."/>
            <person name="Quackenbush J."/>
            <person name="Wahlestedt C."/>
            <person name="Mattick J.S."/>
            <person name="Hume D.A."/>
            <person name="Kai C."/>
            <person name="Sasaki D."/>
            <person name="Tomaru Y."/>
            <person name="Fukuda S."/>
            <person name="Kanamori-Katayama M."/>
            <person name="Suzuki M."/>
            <person name="Aoki J."/>
            <person name="Arakawa T."/>
            <person name="Iida J."/>
            <person name="Imamura K."/>
            <person name="Itoh M."/>
            <person name="Kato T."/>
            <person name="Kawaji H."/>
            <person name="Kawagashira N."/>
            <person name="Kawashima T."/>
            <person name="Kojima M."/>
            <person name="Kondo S."/>
            <person name="Konno H."/>
            <person name="Nakano K."/>
            <person name="Ninomiya N."/>
            <person name="Nishio T."/>
            <person name="Okada M."/>
            <person name="Plessy C."/>
            <person name="Shibata K."/>
            <person name="Shiraki T."/>
            <person name="Suzuki S."/>
            <person name="Tagami M."/>
            <person name="Waki K."/>
            <person name="Watahiki A."/>
            <person name="Okamura-Oho Y."/>
            <person name="Suzuki H."/>
            <person name="Kawai J."/>
            <person name="Hayashizaki Y."/>
        </authorList>
    </citation>
    <scope>NUCLEOTIDE SEQUENCE [LARGE SCALE MRNA]</scope>
    <source>
        <strain>C57BL/6J</strain>
        <tissue>Stomach</tissue>
    </source>
</reference>
<reference key="2">
    <citation type="journal article" date="2009" name="PLoS Biol.">
        <title>Lineage-specific biology revealed by a finished genome assembly of the mouse.</title>
        <authorList>
            <person name="Church D.M."/>
            <person name="Goodstadt L."/>
            <person name="Hillier L.W."/>
            <person name="Zody M.C."/>
            <person name="Goldstein S."/>
            <person name="She X."/>
            <person name="Bult C.J."/>
            <person name="Agarwala R."/>
            <person name="Cherry J.L."/>
            <person name="DiCuccio M."/>
            <person name="Hlavina W."/>
            <person name="Kapustin Y."/>
            <person name="Meric P."/>
            <person name="Maglott D."/>
            <person name="Birtle Z."/>
            <person name="Marques A.C."/>
            <person name="Graves T."/>
            <person name="Zhou S."/>
            <person name="Teague B."/>
            <person name="Potamousis K."/>
            <person name="Churas C."/>
            <person name="Place M."/>
            <person name="Herschleb J."/>
            <person name="Runnheim R."/>
            <person name="Forrest D."/>
            <person name="Amos-Landgraf J."/>
            <person name="Schwartz D.C."/>
            <person name="Cheng Z."/>
            <person name="Lindblad-Toh K."/>
            <person name="Eichler E.E."/>
            <person name="Ponting C.P."/>
        </authorList>
    </citation>
    <scope>NUCLEOTIDE SEQUENCE [LARGE SCALE GENOMIC DNA]</scope>
    <source>
        <strain>C57BL/6J</strain>
    </source>
</reference>
<reference key="3">
    <citation type="journal article" date="1998" name="Biol. Chem.">
        <title>Molecular cloning and characterization of a novel tissue-specific calpain predominantly expressed in the digestive tract.</title>
        <authorList>
            <person name="Lee H.-J."/>
            <person name="Sorimachi H."/>
            <person name="Jeong S.-Y."/>
            <person name="Ishiura S."/>
            <person name="Suzuki K."/>
        </authorList>
    </citation>
    <scope>NUCLEOTIDE SEQUENCE [MRNA] OF 3-690</scope>
    <source>
        <strain>BALB/cJ</strain>
    </source>
</reference>
<feature type="chain" id="PRO_0000207723" description="Calpain-9">
    <location>
        <begin position="1"/>
        <end position="690"/>
    </location>
</feature>
<feature type="domain" description="Calpain catalytic" evidence="2">
    <location>
        <begin position="42"/>
        <end position="337"/>
    </location>
</feature>
<feature type="domain" description="EF-hand 1" evidence="3">
    <location>
        <begin position="518"/>
        <end position="552"/>
    </location>
</feature>
<feature type="domain" description="EF-hand 2" evidence="3">
    <location>
        <begin position="561"/>
        <end position="589"/>
    </location>
</feature>
<feature type="domain" description="EF-hand 3" evidence="3">
    <location>
        <begin position="591"/>
        <end position="626"/>
    </location>
</feature>
<feature type="region of interest" description="Disordered" evidence="4">
    <location>
        <begin position="1"/>
        <end position="23"/>
    </location>
</feature>
<feature type="region of interest" description="Domain III">
    <location>
        <begin position="338"/>
        <end position="521"/>
    </location>
</feature>
<feature type="region of interest" description="Domain IV">
    <location>
        <begin position="522"/>
        <end position="690"/>
    </location>
</feature>
<feature type="active site" evidence="1">
    <location>
        <position position="97"/>
    </location>
</feature>
<feature type="active site" evidence="1">
    <location>
        <position position="254"/>
    </location>
</feature>
<feature type="active site" evidence="1">
    <location>
        <position position="278"/>
    </location>
</feature>
<feature type="binding site" evidence="1">
    <location>
        <position position="81"/>
    </location>
    <ligand>
        <name>Ca(2+)</name>
        <dbReference type="ChEBI" id="CHEBI:29108"/>
        <label>1</label>
    </ligand>
</feature>
<feature type="binding site" evidence="1">
    <location>
        <position position="83"/>
    </location>
    <ligand>
        <name>Ca(2+)</name>
        <dbReference type="ChEBI" id="CHEBI:29108"/>
        <label>1</label>
    </ligand>
</feature>
<feature type="binding site" evidence="1">
    <location>
        <position position="88"/>
    </location>
    <ligand>
        <name>Ca(2+)</name>
        <dbReference type="ChEBI" id="CHEBI:29108"/>
        <label>1</label>
    </ligand>
</feature>
<feature type="binding site" evidence="1">
    <location>
        <position position="167"/>
    </location>
    <ligand>
        <name>Ca(2+)</name>
        <dbReference type="ChEBI" id="CHEBI:29108"/>
        <label>1</label>
    </ligand>
</feature>
<feature type="binding site" evidence="1">
    <location>
        <position position="284"/>
    </location>
    <ligand>
        <name>Ca(2+)</name>
        <dbReference type="ChEBI" id="CHEBI:29108"/>
        <label>2</label>
    </ligand>
</feature>
<feature type="binding site" evidence="1">
    <location>
        <position position="291"/>
    </location>
    <ligand>
        <name>Ca(2+)</name>
        <dbReference type="ChEBI" id="CHEBI:29108"/>
        <label>2</label>
    </ligand>
</feature>
<feature type="binding site">
    <location>
        <position position="312"/>
    </location>
    <ligand>
        <name>Ca(2+)</name>
        <dbReference type="ChEBI" id="CHEBI:29108"/>
        <label>2</label>
    </ligand>
</feature>
<feature type="binding site" evidence="1">
    <location>
        <position position="314"/>
    </location>
    <ligand>
        <name>Ca(2+)</name>
        <dbReference type="ChEBI" id="CHEBI:29108"/>
        <label>2</label>
    </ligand>
</feature>
<feature type="binding site" evidence="1">
    <location>
        <position position="316"/>
    </location>
    <ligand>
        <name>Ca(2+)</name>
        <dbReference type="ChEBI" id="CHEBI:29108"/>
        <label>2</label>
    </ligand>
</feature>
<feature type="binding site" evidence="3">
    <location>
        <position position="574"/>
    </location>
    <ligand>
        <name>Ca(2+)</name>
        <dbReference type="ChEBI" id="CHEBI:29108"/>
        <label>3</label>
    </ligand>
</feature>
<feature type="binding site" evidence="3">
    <location>
        <position position="576"/>
    </location>
    <ligand>
        <name>Ca(2+)</name>
        <dbReference type="ChEBI" id="CHEBI:29108"/>
        <label>3</label>
    </ligand>
</feature>
<feature type="binding site" evidence="3">
    <location>
        <position position="578"/>
    </location>
    <ligand>
        <name>Ca(2+)</name>
        <dbReference type="ChEBI" id="CHEBI:29108"/>
        <label>3</label>
    </ligand>
</feature>
<feature type="binding site" evidence="3">
    <location>
        <position position="580"/>
    </location>
    <ligand>
        <name>Ca(2+)</name>
        <dbReference type="ChEBI" id="CHEBI:29108"/>
        <label>3</label>
    </ligand>
</feature>
<feature type="binding site" evidence="3">
    <location>
        <position position="585"/>
    </location>
    <ligand>
        <name>Ca(2+)</name>
        <dbReference type="ChEBI" id="CHEBI:29108"/>
        <label>3</label>
    </ligand>
</feature>
<feature type="binding site" evidence="3">
    <location>
        <position position="604"/>
    </location>
    <ligand>
        <name>Ca(2+)</name>
        <dbReference type="ChEBI" id="CHEBI:29108"/>
        <label>4</label>
    </ligand>
</feature>
<feature type="binding site" evidence="3">
    <location>
        <position position="606"/>
    </location>
    <ligand>
        <name>Ca(2+)</name>
        <dbReference type="ChEBI" id="CHEBI:29108"/>
        <label>4</label>
    </ligand>
</feature>
<feature type="binding site" evidence="3">
    <location>
        <position position="608"/>
    </location>
    <ligand>
        <name>Ca(2+)</name>
        <dbReference type="ChEBI" id="CHEBI:29108"/>
        <label>4</label>
    </ligand>
</feature>
<feature type="binding site" evidence="3">
    <location>
        <position position="610"/>
    </location>
    <ligand>
        <name>Ca(2+)</name>
        <dbReference type="ChEBI" id="CHEBI:29108"/>
        <label>4</label>
    </ligand>
</feature>
<feature type="binding site" evidence="3">
    <location>
        <position position="615"/>
    </location>
    <ligand>
        <name>Ca(2+)</name>
        <dbReference type="ChEBI" id="CHEBI:29108"/>
        <label>4</label>
    </ligand>
</feature>
<feature type="sequence conflict" description="In Ref. 1; BAB25791." evidence="5" ref="1">
    <original>K</original>
    <variation>E</variation>
    <location>
        <position position="188"/>
    </location>
</feature>
<feature type="sequence conflict" description="In Ref. 3; AAB69114." evidence="5" ref="3">
    <original>K</original>
    <variation>R</variation>
    <location>
        <position position="552"/>
    </location>
</feature>
<comment type="function">
    <text evidence="1">Calcium-regulated non-lysosomal thiol-protease.</text>
</comment>
<comment type="subcellular location">
    <subcellularLocation>
        <location evidence="1">Cytoplasm</location>
    </subcellularLocation>
</comment>
<comment type="tissue specificity">
    <text>Predominantly expressed in stomach and small intestine, although low levels of expression in other organs.</text>
</comment>
<comment type="similarity">
    <text evidence="5">Belongs to the peptidase C2 family.</text>
</comment>
<keyword id="KW-0106">Calcium</keyword>
<keyword id="KW-0963">Cytoplasm</keyword>
<keyword id="KW-0378">Hydrolase</keyword>
<keyword id="KW-0479">Metal-binding</keyword>
<keyword id="KW-0645">Protease</keyword>
<keyword id="KW-1185">Reference proteome</keyword>
<keyword id="KW-0677">Repeat</keyword>
<keyword id="KW-0788">Thiol protease</keyword>
<name>CAN9_MOUSE</name>
<proteinExistence type="evidence at transcript level"/>
<evidence type="ECO:0000250" key="1"/>
<evidence type="ECO:0000255" key="2">
    <source>
        <dbReference type="PROSITE-ProRule" id="PRU00239"/>
    </source>
</evidence>
<evidence type="ECO:0000255" key="3">
    <source>
        <dbReference type="PROSITE-ProRule" id="PRU00448"/>
    </source>
</evidence>
<evidence type="ECO:0000256" key="4">
    <source>
        <dbReference type="SAM" id="MobiDB-lite"/>
    </source>
</evidence>
<evidence type="ECO:0000305" key="5"/>
<gene>
    <name type="primary">Capn9</name>
    <name type="synonym">Ncl4</name>
</gene>
<sequence>MPYLHRSLRPQPQPVPGDARTIHSSGQSFEQLRQGCLQSGTLFEDADFPASNVSLFYSERPQVPFVWKRPGEIVEKPEFILGGATRTDICQGELGDCWLLAAIASLTLNQKALTRVVPQDQGFGSGYAGIFHFQFWQHSEWLDVVIDDRLPTFKDRLVFLHSADHNEFWSALLEKAYAKLNGSYEALKGGSAIEAMEDFTGGVAENFQIREAPEDFFEILEKALKRGSLLGCSIDTLNASESEARTSLGLIKGHAYTVTGLDQVNFHGQRIKLIRVRNPWGQVEWNGPWSDSSPEWRSVDLEEQKRLGHTALDDGEFWMAFKDFKIHFDKVEICNLTPDALEDSALHRWEVTIHQGSWVRGSTAGGCRNFLDTFWTNPQIKLSLTERDEGQEGCTFLAALMQKDRRRLKRFGANMLTIGYAIYQCPDKDGHLSRDFFRYHASLARSKTFINLREVSERFQLPPGDYILIPSTFEPHQEADFCLRIFSEKRAVTRDLDENIDIDLPELPKPTPQEEETEEEQQFRALFQRVAGEDMEVSAEELEYVLNAVLQKKTALKFKRLSLLSCRNIISLMDTSGNGKLEFEEFRVFWDKLKHWMDLFLQFDVDKSGTMSSYELRTALKAAGFQLGGHLLQLIVLRYADEDLQLDFDDYLNCLVRLENASRVFQSLSVKNKDFIHLNINEFISLTMNI</sequence>